<evidence type="ECO:0000250" key="1"/>
<evidence type="ECO:0000250" key="2">
    <source>
        <dbReference type="UniProtKB" id="P17635"/>
    </source>
</evidence>
<evidence type="ECO:0000250" key="3">
    <source>
        <dbReference type="UniProtKB" id="Q99518"/>
    </source>
</evidence>
<evidence type="ECO:0000250" key="4">
    <source>
        <dbReference type="UniProtKB" id="Q9HFE4"/>
    </source>
</evidence>
<evidence type="ECO:0000255" key="5"/>
<evidence type="ECO:0000269" key="6">
    <source>
    </source>
</evidence>
<evidence type="ECO:0000305" key="7"/>
<feature type="initiator methionine" description="Removed" evidence="2">
    <location>
        <position position="1"/>
    </location>
</feature>
<feature type="chain" id="PRO_0000147644" description="Dimethylaniline monooxygenase [N-oxide-forming] 2">
    <location>
        <begin position="2"/>
        <end position="535"/>
    </location>
</feature>
<feature type="transmembrane region" description="Helical" evidence="5">
    <location>
        <begin position="510"/>
        <end position="530"/>
    </location>
</feature>
<feature type="binding site" evidence="4">
    <location>
        <begin position="9"/>
        <end position="13"/>
    </location>
    <ligand>
        <name>FAD</name>
        <dbReference type="ChEBI" id="CHEBI:57692"/>
    </ligand>
</feature>
<feature type="binding site" evidence="4">
    <location>
        <position position="32"/>
    </location>
    <ligand>
        <name>FAD</name>
        <dbReference type="ChEBI" id="CHEBI:57692"/>
    </ligand>
</feature>
<feature type="binding site" evidence="4">
    <location>
        <begin position="40"/>
        <end position="41"/>
    </location>
    <ligand>
        <name>FAD</name>
        <dbReference type="ChEBI" id="CHEBI:57692"/>
    </ligand>
</feature>
<feature type="binding site" evidence="4">
    <location>
        <begin position="60"/>
        <end position="61"/>
    </location>
    <ligand>
        <name>NADP(+)</name>
        <dbReference type="ChEBI" id="CHEBI:58349"/>
    </ligand>
</feature>
<feature type="binding site" evidence="4">
    <location>
        <begin position="61"/>
        <end position="62"/>
    </location>
    <ligand>
        <name>FAD</name>
        <dbReference type="ChEBI" id="CHEBI:57692"/>
    </ligand>
</feature>
<feature type="binding site" evidence="4">
    <location>
        <begin position="195"/>
        <end position="198"/>
    </location>
    <ligand>
        <name>NADP(+)</name>
        <dbReference type="ChEBI" id="CHEBI:58349"/>
    </ligand>
</feature>
<feature type="modified residue" description="N-acetylalanine" evidence="2">
    <location>
        <position position="2"/>
    </location>
</feature>
<feature type="cross-link" description="Glycyl lysine isopeptide (Lys-Gly) (interchain with G-Cter in SUMO)" evidence="3">
    <location>
        <position position="492"/>
    </location>
</feature>
<feature type="sequence variant" description="In B form." evidence="6">
    <original>V</original>
    <variation>L</variation>
    <location>
        <position position="522"/>
    </location>
</feature>
<feature type="sequence variant" description="In B form." evidence="6">
    <original>S</original>
    <variation>F</variation>
    <location>
        <position position="530"/>
    </location>
</feature>
<gene>
    <name evidence="3" type="primary">FMO2</name>
    <name type="synonym">FMO-2</name>
</gene>
<organism>
    <name type="scientific">Cavia porcellus</name>
    <name type="common">Guinea pig</name>
    <dbReference type="NCBI Taxonomy" id="10141"/>
    <lineage>
        <taxon>Eukaryota</taxon>
        <taxon>Metazoa</taxon>
        <taxon>Chordata</taxon>
        <taxon>Craniata</taxon>
        <taxon>Vertebrata</taxon>
        <taxon>Euteleostomi</taxon>
        <taxon>Mammalia</taxon>
        <taxon>Eutheria</taxon>
        <taxon>Euarchontoglires</taxon>
        <taxon>Glires</taxon>
        <taxon>Rodentia</taxon>
        <taxon>Hystricomorpha</taxon>
        <taxon>Caviidae</taxon>
        <taxon>Cavia</taxon>
    </lineage>
</organism>
<name>FMO2_CAVPO</name>
<sequence>MAKKVAVIGAGVSGLISLKCCVDEGLEPTCFERTEDIGGLWRFKENVEDGRASIYKSVITNTSKEMSCFSDFPMPEDFPNFLHNSKLLEYFRLFAKKFDLLKYIQFQTTVLTVKKHPDFSSSGQWEVVTQSDGKEQSAVFDAVMVCSGHHILPHIPLKSFPGIERFKGQYFHSRQYKHPAGFEGKRILVIGIGNSASDIASELSKNAAQVFISTRNGSWVMSRISEDGYPWDMVFHTRFKSMLRNILPRTVSKWMMEQQLNRWFNHANYSLEPKNKYLMKEPILNDDLPSRILYGAVKVKSRVTQLTETSALFEDGTVEEDIDVIVFATGYTFSFPFLEESLVKIEHNMVSLYKYMFPPQLEKPTLTCMGLIQPLGSIFPTVELQARWATRVFKGLCHLPSEKTMMEDIIKRNEKRIDLFGESQSQIVQTNYVDYLDELALEIGAKPDLISFLLKDPELAVKLCFGPCNSYQYRLVGPGQWEGARRAILTQKQRILKPLKTRSVKAAPNLSASFLMKILALVAVFVAFFSQLYGF</sequence>
<reference key="1">
    <citation type="journal article" date="1992" name="Pharmacogenetics">
        <title>Guinea pig or rabbit lung flavin-containing monooxygenases with distinct mobilities in SDS-PAGE are allelic variants that differ at only two positions.</title>
        <authorList>
            <person name="Nikbakht K.N."/>
            <person name="Lawton M.P."/>
            <person name="Philpot R.M."/>
        </authorList>
    </citation>
    <scope>NUCLEOTIDE SEQUENCE [GENOMIC DNA]</scope>
    <scope>VARIANTS 522-LEU AND 530-PHE</scope>
    <scope>POLYMORPHISM</scope>
    <source>
        <strain>Hartley</strain>
        <tissue>Lung</tissue>
    </source>
</reference>
<comment type="function">
    <text evidence="3">Catalyzes the oxidative metabolism of numerous xenobiotics, including mainly therapeutic drugs and insecticides that contain a soft nucleophile, most commonly nitrogen and sulfur and participates to their bioactivation.</text>
</comment>
<comment type="cofactor">
    <cofactor evidence="1">
        <name>FAD</name>
        <dbReference type="ChEBI" id="CHEBI:57692"/>
    </cofactor>
</comment>
<comment type="cofactor">
    <cofactor evidence="1">
        <name>Mg(2+)</name>
        <dbReference type="ChEBI" id="CHEBI:18420"/>
    </cofactor>
</comment>
<comment type="subcellular location">
    <subcellularLocation>
        <location evidence="2">Microsome membrane</location>
        <topology evidence="2">Single-pass membrane protein</topology>
    </subcellularLocation>
    <subcellularLocation>
        <location evidence="2">Endoplasmic reticulum membrane</location>
        <topology evidence="2">Single-pass membrane protein</topology>
    </subcellularLocation>
</comment>
<comment type="tissue specificity">
    <text>Lung.</text>
</comment>
<comment type="polymorphism">
    <text evidence="6">There are two allelic forms (A and B) (PubMed:1306120).</text>
</comment>
<comment type="similarity">
    <text evidence="7">Belongs to the FMO family.</text>
</comment>
<dbReference type="EC" id="1.14.13.-" evidence="3"/>
<dbReference type="EMBL" id="L10037">
    <property type="protein sequence ID" value="AAB59631.1"/>
    <property type="molecule type" value="Genomic_DNA"/>
</dbReference>
<dbReference type="SMR" id="P36366"/>
<dbReference type="FunCoup" id="P36366">
    <property type="interactions" value="159"/>
</dbReference>
<dbReference type="STRING" id="10141.ENSCPOP00000012602"/>
<dbReference type="eggNOG" id="KOG1399">
    <property type="taxonomic scope" value="Eukaryota"/>
</dbReference>
<dbReference type="InParanoid" id="P36366"/>
<dbReference type="Proteomes" id="UP000005447">
    <property type="component" value="Unassembled WGS sequence"/>
</dbReference>
<dbReference type="GO" id="GO:0005789">
    <property type="term" value="C:endoplasmic reticulum membrane"/>
    <property type="evidence" value="ECO:0007669"/>
    <property type="project" value="UniProtKB-SubCell"/>
</dbReference>
<dbReference type="GO" id="GO:0016020">
    <property type="term" value="C:membrane"/>
    <property type="evidence" value="ECO:0000250"/>
    <property type="project" value="UniProtKB"/>
</dbReference>
<dbReference type="GO" id="GO:0050660">
    <property type="term" value="F:flavin adenine dinucleotide binding"/>
    <property type="evidence" value="ECO:0007669"/>
    <property type="project" value="InterPro"/>
</dbReference>
<dbReference type="GO" id="GO:0004499">
    <property type="term" value="F:N,N-dimethylaniline monooxygenase activity"/>
    <property type="evidence" value="ECO:0007669"/>
    <property type="project" value="InterPro"/>
</dbReference>
<dbReference type="GO" id="GO:0050661">
    <property type="term" value="F:NADP binding"/>
    <property type="evidence" value="ECO:0007669"/>
    <property type="project" value="InterPro"/>
</dbReference>
<dbReference type="FunFam" id="3.50.50.60:FF:000042">
    <property type="entry name" value="Dimethylaniline monooxygenase [N-oxide-forming]"/>
    <property type="match status" value="1"/>
</dbReference>
<dbReference type="FunFam" id="3.50.50.60:FF:000073">
    <property type="entry name" value="Dimethylaniline monooxygenase [N-oxide-forming]"/>
    <property type="match status" value="1"/>
</dbReference>
<dbReference type="FunFam" id="3.50.50.60:FF:000409">
    <property type="entry name" value="Dimethylaniline monooxygenase [N-oxide-forming]"/>
    <property type="match status" value="1"/>
</dbReference>
<dbReference type="Gene3D" id="3.50.50.60">
    <property type="entry name" value="FAD/NAD(P)-binding domain"/>
    <property type="match status" value="4"/>
</dbReference>
<dbReference type="InterPro" id="IPR036188">
    <property type="entry name" value="FAD/NAD-bd_sf"/>
</dbReference>
<dbReference type="InterPro" id="IPR000960">
    <property type="entry name" value="Flavin_mOase"/>
</dbReference>
<dbReference type="InterPro" id="IPR020946">
    <property type="entry name" value="Flavin_mOase-like"/>
</dbReference>
<dbReference type="InterPro" id="IPR002254">
    <property type="entry name" value="Flavin_mOase_2"/>
</dbReference>
<dbReference type="InterPro" id="IPR050346">
    <property type="entry name" value="FMO-like"/>
</dbReference>
<dbReference type="PANTHER" id="PTHR23023">
    <property type="entry name" value="DIMETHYLANILINE MONOOXYGENASE"/>
    <property type="match status" value="1"/>
</dbReference>
<dbReference type="Pfam" id="PF00743">
    <property type="entry name" value="FMO-like"/>
    <property type="match status" value="1"/>
</dbReference>
<dbReference type="PIRSF" id="PIRSF000332">
    <property type="entry name" value="FMO"/>
    <property type="match status" value="1"/>
</dbReference>
<dbReference type="PRINTS" id="PR00370">
    <property type="entry name" value="FMOXYGENASE"/>
</dbReference>
<dbReference type="PRINTS" id="PR01122">
    <property type="entry name" value="FMOXYGENASE2"/>
</dbReference>
<dbReference type="SUPFAM" id="SSF51905">
    <property type="entry name" value="FAD/NAD(P)-binding domain"/>
    <property type="match status" value="2"/>
</dbReference>
<proteinExistence type="evidence at transcript level"/>
<keyword id="KW-0007">Acetylation</keyword>
<keyword id="KW-0256">Endoplasmic reticulum</keyword>
<keyword id="KW-0274">FAD</keyword>
<keyword id="KW-0285">Flavoprotein</keyword>
<keyword id="KW-1017">Isopeptide bond</keyword>
<keyword id="KW-0460">Magnesium</keyword>
<keyword id="KW-0472">Membrane</keyword>
<keyword id="KW-0492">Microsome</keyword>
<keyword id="KW-0503">Monooxygenase</keyword>
<keyword id="KW-0521">NADP</keyword>
<keyword id="KW-0560">Oxidoreductase</keyword>
<keyword id="KW-1185">Reference proteome</keyword>
<keyword id="KW-0812">Transmembrane</keyword>
<keyword id="KW-1133">Transmembrane helix</keyword>
<keyword id="KW-0832">Ubl conjugation</keyword>
<accession>P36366</accession>
<accession>Q05194</accession>
<protein>
    <recommendedName>
        <fullName evidence="3">Dimethylaniline monooxygenase [N-oxide-forming] 2</fullName>
        <ecNumber evidence="3">1.14.13.-</ecNumber>
    </recommendedName>
    <alternativeName>
        <fullName>Dimethylaniline oxidase 2</fullName>
    </alternativeName>
    <alternativeName>
        <fullName>FMO 1B1</fullName>
    </alternativeName>
    <alternativeName>
        <fullName>Pulmonary flavin-containing monooxygenase 2</fullName>
        <shortName>FMO 2</shortName>
    </alternativeName>
</protein>